<gene>
    <name evidence="1" type="primary">hmgA</name>
    <name type="ordered locus">PSPPH_3246</name>
</gene>
<feature type="chain" id="PRO_0000225793" description="Homogentisate 1,2-dioxygenase">
    <location>
        <begin position="1"/>
        <end position="435"/>
    </location>
</feature>
<feature type="active site" description="Proton acceptor" evidence="1">
    <location>
        <position position="289"/>
    </location>
</feature>
<feature type="binding site" evidence="1">
    <location>
        <position position="332"/>
    </location>
    <ligand>
        <name>Fe cation</name>
        <dbReference type="ChEBI" id="CHEBI:24875"/>
    </ligand>
</feature>
<feature type="binding site" evidence="1">
    <location>
        <position position="338"/>
    </location>
    <ligand>
        <name>Fe cation</name>
        <dbReference type="ChEBI" id="CHEBI:24875"/>
    </ligand>
</feature>
<feature type="binding site" evidence="1">
    <location>
        <position position="347"/>
    </location>
    <ligand>
        <name>homogentisate</name>
        <dbReference type="ChEBI" id="CHEBI:16169"/>
    </ligand>
</feature>
<feature type="binding site" evidence="1">
    <location>
        <position position="368"/>
    </location>
    <ligand>
        <name>Fe cation</name>
        <dbReference type="ChEBI" id="CHEBI:24875"/>
    </ligand>
</feature>
<feature type="binding site" evidence="1">
    <location>
        <position position="368"/>
    </location>
    <ligand>
        <name>homogentisate</name>
        <dbReference type="ChEBI" id="CHEBI:16169"/>
    </ligand>
</feature>
<evidence type="ECO:0000255" key="1">
    <source>
        <dbReference type="HAMAP-Rule" id="MF_00334"/>
    </source>
</evidence>
<sequence>MAIHSRSDALAYQSGFGNQFSSEALPGALPIGQNSPQKHPLGLYAEQFSGTAFTVARSEARRTWLYRIKPSAAHPRYQRMGRQIAGQEQGPINPNRLRWNAFDIPAEPVDFIDGLIPLASTSAADQADGVSVYVYAANTSMQRAFFSADGEWLIVPQQGRLRIITELGLLDIEPLEIAVLPRGMKFRVQLLDSSARGYICENHGCALRLPELGPIGSNGLANPRDFLTPVAWFEDNQQPVELVQKFLGELWSTHLEHSPFDVVGWHGNNVAYKYDLRRFNTIGTVSYDHPDPSIFTVLTSPGAAHGQANIDFVIFPPRWMVAENTFRPPWFHRNLMNEFMGLIDGAYDAKAEGFMPGGASLHNCMSAHGPDNVTAEKAIAAELKPHKIENTMAFMFETGKVLRPSRHALGCPQLQADYDACWNDMTRTFNKEPRR</sequence>
<proteinExistence type="inferred from homology"/>
<name>HGD_PSE14</name>
<dbReference type="EC" id="1.13.11.5" evidence="1"/>
<dbReference type="EMBL" id="CP000058">
    <property type="protein sequence ID" value="AAZ36498.1"/>
    <property type="molecule type" value="Genomic_DNA"/>
</dbReference>
<dbReference type="RefSeq" id="WP_004665771.1">
    <property type="nucleotide sequence ID" value="NC_005773.3"/>
</dbReference>
<dbReference type="SMR" id="Q48GS7"/>
<dbReference type="KEGG" id="psp:PSPPH_3246"/>
<dbReference type="eggNOG" id="COG3508">
    <property type="taxonomic scope" value="Bacteria"/>
</dbReference>
<dbReference type="HOGENOM" id="CLU_027174_0_0_6"/>
<dbReference type="UniPathway" id="UPA00139">
    <property type="reaction ID" value="UER00339"/>
</dbReference>
<dbReference type="Proteomes" id="UP000000551">
    <property type="component" value="Chromosome"/>
</dbReference>
<dbReference type="GO" id="GO:0005737">
    <property type="term" value="C:cytoplasm"/>
    <property type="evidence" value="ECO:0007669"/>
    <property type="project" value="TreeGrafter"/>
</dbReference>
<dbReference type="GO" id="GO:0004411">
    <property type="term" value="F:homogentisate 1,2-dioxygenase activity"/>
    <property type="evidence" value="ECO:0007669"/>
    <property type="project" value="UniProtKB-UniRule"/>
</dbReference>
<dbReference type="GO" id="GO:0005506">
    <property type="term" value="F:iron ion binding"/>
    <property type="evidence" value="ECO:0007669"/>
    <property type="project" value="UniProtKB-UniRule"/>
</dbReference>
<dbReference type="GO" id="GO:0006559">
    <property type="term" value="P:L-phenylalanine catabolic process"/>
    <property type="evidence" value="ECO:0007669"/>
    <property type="project" value="UniProtKB-UniRule"/>
</dbReference>
<dbReference type="GO" id="GO:0006572">
    <property type="term" value="P:tyrosine catabolic process"/>
    <property type="evidence" value="ECO:0007669"/>
    <property type="project" value="UniProtKB-UniRule"/>
</dbReference>
<dbReference type="CDD" id="cd07000">
    <property type="entry name" value="cupin_HGO_N"/>
    <property type="match status" value="1"/>
</dbReference>
<dbReference type="FunFam" id="2.60.120.10:FF:000036">
    <property type="entry name" value="Homogentisate 1,2-dioxygenase"/>
    <property type="match status" value="1"/>
</dbReference>
<dbReference type="Gene3D" id="2.60.120.10">
    <property type="entry name" value="Jelly Rolls"/>
    <property type="match status" value="1"/>
</dbReference>
<dbReference type="HAMAP" id="MF_00334">
    <property type="entry name" value="Homogentis_dioxygen"/>
    <property type="match status" value="1"/>
</dbReference>
<dbReference type="InterPro" id="IPR046451">
    <property type="entry name" value="HgmA_C"/>
</dbReference>
<dbReference type="InterPro" id="IPR046452">
    <property type="entry name" value="HgmA_N"/>
</dbReference>
<dbReference type="InterPro" id="IPR005708">
    <property type="entry name" value="Homogentis_dOase"/>
</dbReference>
<dbReference type="InterPro" id="IPR022950">
    <property type="entry name" value="Homogentis_dOase_bac"/>
</dbReference>
<dbReference type="InterPro" id="IPR014710">
    <property type="entry name" value="RmlC-like_jellyroll"/>
</dbReference>
<dbReference type="InterPro" id="IPR011051">
    <property type="entry name" value="RmlC_Cupin_sf"/>
</dbReference>
<dbReference type="NCBIfam" id="TIGR01015">
    <property type="entry name" value="hmgA"/>
    <property type="match status" value="1"/>
</dbReference>
<dbReference type="PANTHER" id="PTHR11056">
    <property type="entry name" value="HOMOGENTISATE 1,2-DIOXYGENASE"/>
    <property type="match status" value="1"/>
</dbReference>
<dbReference type="PANTHER" id="PTHR11056:SF0">
    <property type="entry name" value="HOMOGENTISATE 1,2-DIOXYGENASE"/>
    <property type="match status" value="1"/>
</dbReference>
<dbReference type="Pfam" id="PF04209">
    <property type="entry name" value="HgmA_C"/>
    <property type="match status" value="1"/>
</dbReference>
<dbReference type="Pfam" id="PF20510">
    <property type="entry name" value="HgmA_N"/>
    <property type="match status" value="1"/>
</dbReference>
<dbReference type="SUPFAM" id="SSF51182">
    <property type="entry name" value="RmlC-like cupins"/>
    <property type="match status" value="1"/>
</dbReference>
<protein>
    <recommendedName>
        <fullName evidence="1">Homogentisate 1,2-dioxygenase</fullName>
        <shortName evidence="1">HGDO</shortName>
        <ecNumber evidence="1">1.13.11.5</ecNumber>
    </recommendedName>
    <alternativeName>
        <fullName evidence="1">Homogentisate oxygenase</fullName>
    </alternativeName>
    <alternativeName>
        <fullName evidence="1">Homogentisic acid oxidase</fullName>
    </alternativeName>
    <alternativeName>
        <fullName evidence="1">Homogentisicase</fullName>
    </alternativeName>
</protein>
<keyword id="KW-0223">Dioxygenase</keyword>
<keyword id="KW-0408">Iron</keyword>
<keyword id="KW-0479">Metal-binding</keyword>
<keyword id="KW-0560">Oxidoreductase</keyword>
<keyword id="KW-0585">Phenylalanine catabolism</keyword>
<keyword id="KW-0828">Tyrosine catabolism</keyword>
<comment type="function">
    <text evidence="1">Involved in the catabolism of homogentisate (2,5-dihydroxyphenylacetate or 2,5-OH-PhAc), a central intermediate in the degradation of phenylalanine and tyrosine. Catalyzes the oxidative ring cleavage of the aromatic ring of homogentisate to yield maleylacetoacetate.</text>
</comment>
<comment type="catalytic activity">
    <reaction evidence="1">
        <text>homogentisate + O2 = 4-maleylacetoacetate + H(+)</text>
        <dbReference type="Rhea" id="RHEA:15449"/>
        <dbReference type="ChEBI" id="CHEBI:15378"/>
        <dbReference type="ChEBI" id="CHEBI:15379"/>
        <dbReference type="ChEBI" id="CHEBI:16169"/>
        <dbReference type="ChEBI" id="CHEBI:17105"/>
        <dbReference type="EC" id="1.13.11.5"/>
    </reaction>
</comment>
<comment type="cofactor">
    <cofactor evidence="1">
        <name>Fe cation</name>
        <dbReference type="ChEBI" id="CHEBI:24875"/>
    </cofactor>
</comment>
<comment type="pathway">
    <text evidence="1">Amino-acid degradation; L-phenylalanine degradation; acetoacetate and fumarate from L-phenylalanine: step 4/6.</text>
</comment>
<comment type="subunit">
    <text evidence="1">Hexamer; dimer of trimers.</text>
</comment>
<comment type="similarity">
    <text evidence="1">Belongs to the homogentisate dioxygenase family.</text>
</comment>
<reference key="1">
    <citation type="journal article" date="2005" name="J. Bacteriol.">
        <title>Whole-genome sequence analysis of Pseudomonas syringae pv. phaseolicola 1448A reveals divergence among pathovars in genes involved in virulence and transposition.</title>
        <authorList>
            <person name="Joardar V."/>
            <person name="Lindeberg M."/>
            <person name="Jackson R.W."/>
            <person name="Selengut J."/>
            <person name="Dodson R."/>
            <person name="Brinkac L.M."/>
            <person name="Daugherty S.C."/>
            <person name="DeBoy R.T."/>
            <person name="Durkin A.S."/>
            <person name="Gwinn Giglio M."/>
            <person name="Madupu R."/>
            <person name="Nelson W.C."/>
            <person name="Rosovitz M.J."/>
            <person name="Sullivan S.A."/>
            <person name="Crabtree J."/>
            <person name="Creasy T."/>
            <person name="Davidsen T.M."/>
            <person name="Haft D.H."/>
            <person name="Zafar N."/>
            <person name="Zhou L."/>
            <person name="Halpin R."/>
            <person name="Holley T."/>
            <person name="Khouri H.M."/>
            <person name="Feldblyum T.V."/>
            <person name="White O."/>
            <person name="Fraser C.M."/>
            <person name="Chatterjee A.K."/>
            <person name="Cartinhour S."/>
            <person name="Schneider D."/>
            <person name="Mansfield J.W."/>
            <person name="Collmer A."/>
            <person name="Buell R."/>
        </authorList>
    </citation>
    <scope>NUCLEOTIDE SEQUENCE [LARGE SCALE GENOMIC DNA]</scope>
    <source>
        <strain>1448A / Race 6</strain>
    </source>
</reference>
<accession>Q48GS7</accession>
<organism>
    <name type="scientific">Pseudomonas savastanoi pv. phaseolicola (strain 1448A / Race 6)</name>
    <name type="common">Pseudomonas syringae pv. phaseolicola (strain 1448A / Race 6)</name>
    <dbReference type="NCBI Taxonomy" id="264730"/>
    <lineage>
        <taxon>Bacteria</taxon>
        <taxon>Pseudomonadati</taxon>
        <taxon>Pseudomonadota</taxon>
        <taxon>Gammaproteobacteria</taxon>
        <taxon>Pseudomonadales</taxon>
        <taxon>Pseudomonadaceae</taxon>
        <taxon>Pseudomonas</taxon>
    </lineage>
</organism>